<organism>
    <name type="scientific">Pseudomonas aeruginosa (strain ATCC 15692 / DSM 22644 / CIP 104116 / JCM 14847 / LMG 12228 / 1C / PRS 101 / PAO1)</name>
    <dbReference type="NCBI Taxonomy" id="208964"/>
    <lineage>
        <taxon>Bacteria</taxon>
        <taxon>Pseudomonadati</taxon>
        <taxon>Pseudomonadota</taxon>
        <taxon>Gammaproteobacteria</taxon>
        <taxon>Pseudomonadales</taxon>
        <taxon>Pseudomonadaceae</taxon>
        <taxon>Pseudomonas</taxon>
    </lineage>
</organism>
<protein>
    <recommendedName>
        <fullName evidence="1">Selenide, water dikinase</fullName>
        <ecNumber evidence="1">2.7.9.3</ecNumber>
    </recommendedName>
    <alternativeName>
        <fullName evidence="1">Selenium donor protein</fullName>
    </alternativeName>
    <alternativeName>
        <fullName evidence="1">Selenophosphate synthase</fullName>
    </alternativeName>
</protein>
<keyword id="KW-0067">ATP-binding</keyword>
<keyword id="KW-0418">Kinase</keyword>
<keyword id="KW-0460">Magnesium</keyword>
<keyword id="KW-0479">Metal-binding</keyword>
<keyword id="KW-0547">Nucleotide-binding</keyword>
<keyword id="KW-1185">Reference proteome</keyword>
<keyword id="KW-0711">Selenium</keyword>
<keyword id="KW-0808">Transferase</keyword>
<feature type="chain" id="PRO_0000127632" description="Selenide, water dikinase">
    <location>
        <begin position="1"/>
        <end position="344"/>
    </location>
</feature>
<feature type="active site" evidence="1">
    <location>
        <position position="16"/>
    </location>
</feature>
<feature type="binding site" description="in other chain" evidence="1">
    <location>
        <position position="19"/>
    </location>
    <ligand>
        <name>ATP</name>
        <dbReference type="ChEBI" id="CHEBI:30616"/>
        <note>ligand shared between dimeric partners</note>
    </ligand>
</feature>
<feature type="binding site" description="in other chain" evidence="1">
    <location>
        <begin position="47"/>
        <end position="49"/>
    </location>
    <ligand>
        <name>ATP</name>
        <dbReference type="ChEBI" id="CHEBI:30616"/>
        <note>ligand shared between dimeric partners</note>
    </ligand>
</feature>
<feature type="binding site" evidence="1">
    <location>
        <position position="50"/>
    </location>
    <ligand>
        <name>Mg(2+)</name>
        <dbReference type="ChEBI" id="CHEBI:18420"/>
    </ligand>
</feature>
<feature type="binding site" description="in other chain" evidence="1">
    <location>
        <position position="67"/>
    </location>
    <ligand>
        <name>ATP</name>
        <dbReference type="ChEBI" id="CHEBI:30616"/>
        <note>ligand shared between dimeric partners</note>
    </ligand>
</feature>
<feature type="binding site" description="in other chain" evidence="1">
    <location>
        <position position="90"/>
    </location>
    <ligand>
        <name>ATP</name>
        <dbReference type="ChEBI" id="CHEBI:30616"/>
        <note>ligand shared between dimeric partners</note>
    </ligand>
</feature>
<feature type="binding site" evidence="1">
    <location>
        <position position="90"/>
    </location>
    <ligand>
        <name>Mg(2+)</name>
        <dbReference type="ChEBI" id="CHEBI:18420"/>
    </ligand>
</feature>
<feature type="binding site" evidence="1">
    <location>
        <begin position="138"/>
        <end position="140"/>
    </location>
    <ligand>
        <name>ATP</name>
        <dbReference type="ChEBI" id="CHEBI:30616"/>
        <note>ligand shared between dimeric partners</note>
    </ligand>
</feature>
<feature type="binding site" evidence="1">
    <location>
        <position position="226"/>
    </location>
    <ligand>
        <name>Mg(2+)</name>
        <dbReference type="ChEBI" id="CHEBI:18420"/>
    </ligand>
</feature>
<feature type="site" description="Important for catalytic activity" evidence="1">
    <location>
        <position position="19"/>
    </location>
</feature>
<name>SELD_PSEAE</name>
<sequence>MSEAIRLTQYSHGAGCGCKISPKVLEVILAGSGAQNLDPKLWVGNASRDDAAVYALDEERGVVSTTDFFMPIVDDPFDFGRIAATNAISDIYAMGGDPLMAIAILGWPVNVLAAEVAREVIAGGRKVCEEAGIPLAGGHSIDAPEPIFGLAVTGVVEKRFMKRNDTAEAGCRLYLTKPLGIGILTTAEKKARLRAEDVGVARDWMCTLNRPGARFGRLAGVKAMTDVTGFGLLGHLVEMADGSKLTARVEYAAVPRLASAEYYLEQGCVPGGTLRNFDSYGERIAPLPEVQKLLLCDPQTSGGLLVAVAPEGEAEFLAVAAELGLQLAPIGELVERQSLAVQVL</sequence>
<reference key="1">
    <citation type="journal article" date="2000" name="Nature">
        <title>Complete genome sequence of Pseudomonas aeruginosa PAO1, an opportunistic pathogen.</title>
        <authorList>
            <person name="Stover C.K."/>
            <person name="Pham X.-Q.T."/>
            <person name="Erwin A.L."/>
            <person name="Mizoguchi S.D."/>
            <person name="Warrener P."/>
            <person name="Hickey M.J."/>
            <person name="Brinkman F.S.L."/>
            <person name="Hufnagle W.O."/>
            <person name="Kowalik D.J."/>
            <person name="Lagrou M."/>
            <person name="Garber R.L."/>
            <person name="Goltry L."/>
            <person name="Tolentino E."/>
            <person name="Westbrock-Wadman S."/>
            <person name="Yuan Y."/>
            <person name="Brody L.L."/>
            <person name="Coulter S.N."/>
            <person name="Folger K.R."/>
            <person name="Kas A."/>
            <person name="Larbig K."/>
            <person name="Lim R.M."/>
            <person name="Smith K.A."/>
            <person name="Spencer D.H."/>
            <person name="Wong G.K.-S."/>
            <person name="Wu Z."/>
            <person name="Paulsen I.T."/>
            <person name="Reizer J."/>
            <person name="Saier M.H. Jr."/>
            <person name="Hancock R.E.W."/>
            <person name="Lory S."/>
            <person name="Olson M.V."/>
        </authorList>
    </citation>
    <scope>NUCLEOTIDE SEQUENCE [LARGE SCALE GENOMIC DNA]</scope>
    <source>
        <strain>ATCC 15692 / DSM 22644 / CIP 104116 / JCM 14847 / LMG 12228 / 1C / PRS 101 / PAO1</strain>
    </source>
</reference>
<proteinExistence type="inferred from homology"/>
<accession>Q9I383</accession>
<dbReference type="EC" id="2.7.9.3" evidence="1"/>
<dbReference type="EMBL" id="AE004091">
    <property type="protein sequence ID" value="AAG05031.1"/>
    <property type="molecule type" value="Genomic_DNA"/>
</dbReference>
<dbReference type="PIR" id="G83439">
    <property type="entry name" value="G83439"/>
</dbReference>
<dbReference type="RefSeq" id="NP_250333.1">
    <property type="nucleotide sequence ID" value="NC_002516.2"/>
</dbReference>
<dbReference type="RefSeq" id="WP_003087546.1">
    <property type="nucleotide sequence ID" value="NZ_QZGE01000003.1"/>
</dbReference>
<dbReference type="SMR" id="Q9I383"/>
<dbReference type="FunCoup" id="Q9I383">
    <property type="interactions" value="392"/>
</dbReference>
<dbReference type="STRING" id="208964.PA1642"/>
<dbReference type="PaxDb" id="208964-PA1642"/>
<dbReference type="GeneID" id="877775"/>
<dbReference type="KEGG" id="pae:PA1642"/>
<dbReference type="PATRIC" id="fig|208964.12.peg.1702"/>
<dbReference type="PseudoCAP" id="PA1642"/>
<dbReference type="HOGENOM" id="CLU_032859_0_1_6"/>
<dbReference type="InParanoid" id="Q9I383"/>
<dbReference type="OrthoDB" id="9767928at2"/>
<dbReference type="PhylomeDB" id="Q9I383"/>
<dbReference type="BioCyc" id="PAER208964:G1FZ6-1672-MONOMER"/>
<dbReference type="Proteomes" id="UP000002438">
    <property type="component" value="Chromosome"/>
</dbReference>
<dbReference type="GO" id="GO:0005737">
    <property type="term" value="C:cytoplasm"/>
    <property type="evidence" value="ECO:0000318"/>
    <property type="project" value="GO_Central"/>
</dbReference>
<dbReference type="GO" id="GO:0005524">
    <property type="term" value="F:ATP binding"/>
    <property type="evidence" value="ECO:0007669"/>
    <property type="project" value="UniProtKB-UniRule"/>
</dbReference>
<dbReference type="GO" id="GO:0000287">
    <property type="term" value="F:magnesium ion binding"/>
    <property type="evidence" value="ECO:0000250"/>
    <property type="project" value="PseudoCAP"/>
</dbReference>
<dbReference type="GO" id="GO:0004756">
    <property type="term" value="F:selenide, water dikinase activity"/>
    <property type="evidence" value="ECO:0000250"/>
    <property type="project" value="PseudoCAP"/>
</dbReference>
<dbReference type="GO" id="GO:0016260">
    <property type="term" value="P:selenocysteine biosynthetic process"/>
    <property type="evidence" value="ECO:0000250"/>
    <property type="project" value="PseudoCAP"/>
</dbReference>
<dbReference type="GO" id="GO:0070329">
    <property type="term" value="P:tRNA seleno-modification"/>
    <property type="evidence" value="ECO:0000250"/>
    <property type="project" value="PseudoCAP"/>
</dbReference>
<dbReference type="CDD" id="cd02195">
    <property type="entry name" value="SelD"/>
    <property type="match status" value="1"/>
</dbReference>
<dbReference type="FunFam" id="3.30.1330.10:FF:000003">
    <property type="entry name" value="Selenide, water dikinase"/>
    <property type="match status" value="1"/>
</dbReference>
<dbReference type="FunFam" id="3.90.650.10:FF:000004">
    <property type="entry name" value="Selenide, water dikinase"/>
    <property type="match status" value="1"/>
</dbReference>
<dbReference type="Gene3D" id="3.90.650.10">
    <property type="entry name" value="PurM-like C-terminal domain"/>
    <property type="match status" value="1"/>
</dbReference>
<dbReference type="Gene3D" id="3.30.1330.10">
    <property type="entry name" value="PurM-like, N-terminal domain"/>
    <property type="match status" value="1"/>
</dbReference>
<dbReference type="HAMAP" id="MF_00625">
    <property type="entry name" value="SelD"/>
    <property type="match status" value="1"/>
</dbReference>
<dbReference type="InterPro" id="IPR010918">
    <property type="entry name" value="PurM-like_C_dom"/>
</dbReference>
<dbReference type="InterPro" id="IPR036676">
    <property type="entry name" value="PurM-like_C_sf"/>
</dbReference>
<dbReference type="InterPro" id="IPR016188">
    <property type="entry name" value="PurM-like_N"/>
</dbReference>
<dbReference type="InterPro" id="IPR036921">
    <property type="entry name" value="PurM-like_N_sf"/>
</dbReference>
<dbReference type="InterPro" id="IPR023061">
    <property type="entry name" value="SelD_I"/>
</dbReference>
<dbReference type="InterPro" id="IPR004536">
    <property type="entry name" value="SPS/SelD"/>
</dbReference>
<dbReference type="NCBIfam" id="NF002098">
    <property type="entry name" value="PRK00943.1"/>
    <property type="match status" value="1"/>
</dbReference>
<dbReference type="NCBIfam" id="TIGR00476">
    <property type="entry name" value="selD"/>
    <property type="match status" value="1"/>
</dbReference>
<dbReference type="PANTHER" id="PTHR10256:SF0">
    <property type="entry name" value="INACTIVE SELENIDE, WATER DIKINASE-LIKE PROTEIN-RELATED"/>
    <property type="match status" value="1"/>
</dbReference>
<dbReference type="PANTHER" id="PTHR10256">
    <property type="entry name" value="SELENIDE, WATER DIKINASE"/>
    <property type="match status" value="1"/>
</dbReference>
<dbReference type="Pfam" id="PF00586">
    <property type="entry name" value="AIRS"/>
    <property type="match status" value="1"/>
</dbReference>
<dbReference type="Pfam" id="PF02769">
    <property type="entry name" value="AIRS_C"/>
    <property type="match status" value="1"/>
</dbReference>
<dbReference type="PIRSF" id="PIRSF036407">
    <property type="entry name" value="Selenphspht_syn"/>
    <property type="match status" value="1"/>
</dbReference>
<dbReference type="SUPFAM" id="SSF56042">
    <property type="entry name" value="PurM C-terminal domain-like"/>
    <property type="match status" value="1"/>
</dbReference>
<dbReference type="SUPFAM" id="SSF55326">
    <property type="entry name" value="PurM N-terminal domain-like"/>
    <property type="match status" value="1"/>
</dbReference>
<comment type="function">
    <text evidence="1">Synthesizes selenophosphate from selenide and ATP.</text>
</comment>
<comment type="catalytic activity">
    <reaction evidence="1">
        <text>hydrogenselenide + ATP + H2O = selenophosphate + AMP + phosphate + 2 H(+)</text>
        <dbReference type="Rhea" id="RHEA:18737"/>
        <dbReference type="ChEBI" id="CHEBI:15377"/>
        <dbReference type="ChEBI" id="CHEBI:15378"/>
        <dbReference type="ChEBI" id="CHEBI:16144"/>
        <dbReference type="ChEBI" id="CHEBI:29317"/>
        <dbReference type="ChEBI" id="CHEBI:30616"/>
        <dbReference type="ChEBI" id="CHEBI:43474"/>
        <dbReference type="ChEBI" id="CHEBI:456215"/>
        <dbReference type="EC" id="2.7.9.3"/>
    </reaction>
</comment>
<comment type="cofactor">
    <cofactor evidence="1">
        <name>Mg(2+)</name>
        <dbReference type="ChEBI" id="CHEBI:18420"/>
    </cofactor>
    <text evidence="1">Binds 1 Mg(2+) ion per monomer.</text>
</comment>
<comment type="subunit">
    <text evidence="1">Homodimer.</text>
</comment>
<comment type="similarity">
    <text evidence="1">Belongs to the selenophosphate synthase 1 family. Class I subfamily.</text>
</comment>
<gene>
    <name evidence="1" type="primary">selD</name>
    <name type="ordered locus">PA1642</name>
</gene>
<evidence type="ECO:0000255" key="1">
    <source>
        <dbReference type="HAMAP-Rule" id="MF_00625"/>
    </source>
</evidence>